<dbReference type="EC" id="2.7.1.30"/>
<dbReference type="EMBL" id="AAFI02000035">
    <property type="protein sequence ID" value="EAL67412.1"/>
    <property type="molecule type" value="Genomic_DNA"/>
</dbReference>
<dbReference type="RefSeq" id="XP_641267.1">
    <property type="nucleotide sequence ID" value="XM_636175.1"/>
</dbReference>
<dbReference type="SMR" id="Q54VT8"/>
<dbReference type="FunCoup" id="Q54VT8">
    <property type="interactions" value="291"/>
</dbReference>
<dbReference type="STRING" id="44689.Q54VT8"/>
<dbReference type="PaxDb" id="44689-DDB0218222"/>
<dbReference type="EnsemblProtists" id="EAL67412">
    <property type="protein sequence ID" value="EAL67412"/>
    <property type="gene ID" value="DDB_G0280371"/>
</dbReference>
<dbReference type="GeneID" id="8622399"/>
<dbReference type="KEGG" id="ddi:DDB_G0280371"/>
<dbReference type="dictyBase" id="DDB_G0280371"/>
<dbReference type="VEuPathDB" id="AmoebaDB:DDB_G0280371"/>
<dbReference type="eggNOG" id="KOG2517">
    <property type="taxonomic scope" value="Eukaryota"/>
</dbReference>
<dbReference type="HOGENOM" id="CLU_009281_2_3_1"/>
<dbReference type="InParanoid" id="Q54VT8"/>
<dbReference type="OMA" id="FMLMNIG"/>
<dbReference type="PhylomeDB" id="Q54VT8"/>
<dbReference type="Reactome" id="R-DDI-75109">
    <property type="pathway name" value="Triglyceride biosynthesis"/>
</dbReference>
<dbReference type="UniPathway" id="UPA00618">
    <property type="reaction ID" value="UER00672"/>
</dbReference>
<dbReference type="PRO" id="PR:Q54VT8"/>
<dbReference type="Proteomes" id="UP000002195">
    <property type="component" value="Chromosome 3"/>
</dbReference>
<dbReference type="GO" id="GO:0005739">
    <property type="term" value="C:mitochondrion"/>
    <property type="evidence" value="ECO:0000318"/>
    <property type="project" value="GO_Central"/>
</dbReference>
<dbReference type="GO" id="GO:0005524">
    <property type="term" value="F:ATP binding"/>
    <property type="evidence" value="ECO:0007669"/>
    <property type="project" value="UniProtKB-KW"/>
</dbReference>
<dbReference type="GO" id="GO:0004370">
    <property type="term" value="F:glycerol kinase activity"/>
    <property type="evidence" value="ECO:0000318"/>
    <property type="project" value="GO_Central"/>
</dbReference>
<dbReference type="GO" id="GO:0019563">
    <property type="term" value="P:glycerol catabolic process"/>
    <property type="evidence" value="ECO:0007669"/>
    <property type="project" value="UniProtKB-UniPathway"/>
</dbReference>
<dbReference type="GO" id="GO:0006071">
    <property type="term" value="P:glycerol metabolic process"/>
    <property type="evidence" value="ECO:0000318"/>
    <property type="project" value="GO_Central"/>
</dbReference>
<dbReference type="GO" id="GO:0046167">
    <property type="term" value="P:glycerol-3-phosphate biosynthetic process"/>
    <property type="evidence" value="ECO:0000318"/>
    <property type="project" value="GO_Central"/>
</dbReference>
<dbReference type="GO" id="GO:0006641">
    <property type="term" value="P:triglyceride metabolic process"/>
    <property type="evidence" value="ECO:0000318"/>
    <property type="project" value="GO_Central"/>
</dbReference>
<dbReference type="CDD" id="cd07792">
    <property type="entry name" value="ASKHA_NBD_FGGY_GK1-3-like"/>
    <property type="match status" value="1"/>
</dbReference>
<dbReference type="FunFam" id="3.30.420.40:FF:000007">
    <property type="entry name" value="Glycerol kinase"/>
    <property type="match status" value="1"/>
</dbReference>
<dbReference type="FunFam" id="3.30.420.40:FF:000177">
    <property type="entry name" value="Glycerol kinase"/>
    <property type="match status" value="1"/>
</dbReference>
<dbReference type="Gene3D" id="3.30.420.40">
    <property type="match status" value="2"/>
</dbReference>
<dbReference type="InterPro" id="IPR043129">
    <property type="entry name" value="ATPase_NBD"/>
</dbReference>
<dbReference type="InterPro" id="IPR000577">
    <property type="entry name" value="Carb_kinase_FGGY"/>
</dbReference>
<dbReference type="InterPro" id="IPR018483">
    <property type="entry name" value="Carb_kinase_FGGY_CS"/>
</dbReference>
<dbReference type="InterPro" id="IPR018485">
    <property type="entry name" value="FGGY_C"/>
</dbReference>
<dbReference type="InterPro" id="IPR018484">
    <property type="entry name" value="FGGY_N"/>
</dbReference>
<dbReference type="InterPro" id="IPR042018">
    <property type="entry name" value="GK1-3_metazoan-type"/>
</dbReference>
<dbReference type="NCBIfam" id="NF000756">
    <property type="entry name" value="PRK00047.1"/>
    <property type="match status" value="1"/>
</dbReference>
<dbReference type="PANTHER" id="PTHR10196:SF69">
    <property type="entry name" value="GLYCEROL KINASE"/>
    <property type="match status" value="1"/>
</dbReference>
<dbReference type="PANTHER" id="PTHR10196">
    <property type="entry name" value="SUGAR KINASE"/>
    <property type="match status" value="1"/>
</dbReference>
<dbReference type="Pfam" id="PF02782">
    <property type="entry name" value="FGGY_C"/>
    <property type="match status" value="1"/>
</dbReference>
<dbReference type="Pfam" id="PF00370">
    <property type="entry name" value="FGGY_N"/>
    <property type="match status" value="2"/>
</dbReference>
<dbReference type="PIRSF" id="PIRSF000538">
    <property type="entry name" value="GlpK"/>
    <property type="match status" value="1"/>
</dbReference>
<dbReference type="SUPFAM" id="SSF53067">
    <property type="entry name" value="Actin-like ATPase domain"/>
    <property type="match status" value="2"/>
</dbReference>
<dbReference type="PROSITE" id="PS00933">
    <property type="entry name" value="FGGY_KINASES_1"/>
    <property type="match status" value="1"/>
</dbReference>
<dbReference type="PROSITE" id="PS00445">
    <property type="entry name" value="FGGY_KINASES_2"/>
    <property type="match status" value="1"/>
</dbReference>
<protein>
    <recommendedName>
        <fullName>Probable glycerol kinase</fullName>
        <shortName>GK</shortName>
        <shortName>Glycerokinase</shortName>
        <ecNumber>2.7.1.30</ecNumber>
    </recommendedName>
    <alternativeName>
        <fullName>ATP:glycerol 3-phosphotransferase</fullName>
    </alternativeName>
</protein>
<reference key="1">
    <citation type="journal article" date="2005" name="Nature">
        <title>The genome of the social amoeba Dictyostelium discoideum.</title>
        <authorList>
            <person name="Eichinger L."/>
            <person name="Pachebat J.A."/>
            <person name="Gloeckner G."/>
            <person name="Rajandream M.A."/>
            <person name="Sucgang R."/>
            <person name="Berriman M."/>
            <person name="Song J."/>
            <person name="Olsen R."/>
            <person name="Szafranski K."/>
            <person name="Xu Q."/>
            <person name="Tunggal B."/>
            <person name="Kummerfeld S."/>
            <person name="Madera M."/>
            <person name="Konfortov B.A."/>
            <person name="Rivero F."/>
            <person name="Bankier A.T."/>
            <person name="Lehmann R."/>
            <person name="Hamlin N."/>
            <person name="Davies R."/>
            <person name="Gaudet P."/>
            <person name="Fey P."/>
            <person name="Pilcher K."/>
            <person name="Chen G."/>
            <person name="Saunders D."/>
            <person name="Sodergren E.J."/>
            <person name="Davis P."/>
            <person name="Kerhornou A."/>
            <person name="Nie X."/>
            <person name="Hall N."/>
            <person name="Anjard C."/>
            <person name="Hemphill L."/>
            <person name="Bason N."/>
            <person name="Farbrother P."/>
            <person name="Desany B."/>
            <person name="Just E."/>
            <person name="Morio T."/>
            <person name="Rost R."/>
            <person name="Churcher C.M."/>
            <person name="Cooper J."/>
            <person name="Haydock S."/>
            <person name="van Driessche N."/>
            <person name="Cronin A."/>
            <person name="Goodhead I."/>
            <person name="Muzny D.M."/>
            <person name="Mourier T."/>
            <person name="Pain A."/>
            <person name="Lu M."/>
            <person name="Harper D."/>
            <person name="Lindsay R."/>
            <person name="Hauser H."/>
            <person name="James K.D."/>
            <person name="Quiles M."/>
            <person name="Madan Babu M."/>
            <person name="Saito T."/>
            <person name="Buchrieser C."/>
            <person name="Wardroper A."/>
            <person name="Felder M."/>
            <person name="Thangavelu M."/>
            <person name="Johnson D."/>
            <person name="Knights A."/>
            <person name="Loulseged H."/>
            <person name="Mungall K.L."/>
            <person name="Oliver K."/>
            <person name="Price C."/>
            <person name="Quail M.A."/>
            <person name="Urushihara H."/>
            <person name="Hernandez J."/>
            <person name="Rabbinowitsch E."/>
            <person name="Steffen D."/>
            <person name="Sanders M."/>
            <person name="Ma J."/>
            <person name="Kohara Y."/>
            <person name="Sharp S."/>
            <person name="Simmonds M.N."/>
            <person name="Spiegler S."/>
            <person name="Tivey A."/>
            <person name="Sugano S."/>
            <person name="White B."/>
            <person name="Walker D."/>
            <person name="Woodward J.R."/>
            <person name="Winckler T."/>
            <person name="Tanaka Y."/>
            <person name="Shaulsky G."/>
            <person name="Schleicher M."/>
            <person name="Weinstock G.M."/>
            <person name="Rosenthal A."/>
            <person name="Cox E.C."/>
            <person name="Chisholm R.L."/>
            <person name="Gibbs R.A."/>
            <person name="Loomis W.F."/>
            <person name="Platzer M."/>
            <person name="Kay R.R."/>
            <person name="Williams J.G."/>
            <person name="Dear P.H."/>
            <person name="Noegel A.A."/>
            <person name="Barrell B.G."/>
            <person name="Kuspa A."/>
        </authorList>
    </citation>
    <scope>NUCLEOTIDE SEQUENCE [LARGE SCALE GENOMIC DNA]</scope>
    <source>
        <strain>AX4</strain>
    </source>
</reference>
<proteinExistence type="inferred from homology"/>
<feature type="chain" id="PRO_0000343679" description="Probable glycerol kinase">
    <location>
        <begin position="1"/>
        <end position="539"/>
    </location>
</feature>
<feature type="binding site" evidence="1">
    <location>
        <position position="12"/>
    </location>
    <ligand>
        <name>substrate</name>
    </ligand>
</feature>
<feature type="binding site" evidence="1">
    <location>
        <position position="16"/>
    </location>
    <ligand>
        <name>ATP</name>
        <dbReference type="ChEBI" id="CHEBI:30616"/>
    </ligand>
</feature>
<feature type="binding site" evidence="1">
    <location>
        <position position="86"/>
    </location>
    <ligand>
        <name>substrate</name>
    </ligand>
</feature>
<feature type="binding site" evidence="1">
    <location>
        <position position="168"/>
    </location>
    <ligand>
        <name>substrate</name>
    </ligand>
</feature>
<feature type="binding site" evidence="1">
    <location>
        <position position="285"/>
    </location>
    <ligand>
        <name>substrate</name>
    </ligand>
</feature>
<feature type="binding site" evidence="1">
    <location>
        <position position="307"/>
    </location>
    <ligand>
        <name>ATP</name>
        <dbReference type="ChEBI" id="CHEBI:30616"/>
    </ligand>
</feature>
<feature type="binding site" evidence="1">
    <location>
        <position position="352"/>
    </location>
    <ligand>
        <name>ATP</name>
        <dbReference type="ChEBI" id="CHEBI:30616"/>
    </ligand>
</feature>
<feature type="binding site" evidence="1">
    <location>
        <begin position="453"/>
        <end position="457"/>
    </location>
    <ligand>
        <name>ATP</name>
        <dbReference type="ChEBI" id="CHEBI:30616"/>
    </ligand>
</feature>
<gene>
    <name type="primary">gk</name>
    <name type="ORF">DDB_G0280371</name>
</gene>
<sequence length="539" mass="60005">MKPYIGAIDQGTSSTRFILFDKNGDIVLSHQILLTQHHPHPGWVEHDGNEILESVNKCIQVVMKQYYENNFGTKEDIKAIGITNQRETTIVWDKKTSKPLNNAIVWCDTRTKDLVNYFNNKAKKLIDDNNIIDNNSKSTTVVDGAQGECKLESKNYLREKCGLPLSSYFSGLKLKWLFDNCESVREAYGRGDCLMGTIDSWLVWNLTGGKCHITDVTNASRTMLMNLKTLSWDKELCDFLEVPIEILPNIHSSSEIYGHVTMGDDEQQQQQHPLHGIPIAGVLGDQQAAMVGQMCFEKGQAKNTYGTGCFLLYNTGNDIVHSRNGLLTTVCYQFGKDSPPIYALEGGVAVAGSGVRWLIDNMGIAESSQEIEDLAKSVQDTGGMYFVPAFSGLFAPYWRDDARGVMVGLTHHTNRCHIARSVLESTCLQTFEVLDAMQKDSGNKLVELRVDGGMAKNNLLLQIQSDLLGLPVVKPISLETTCFGAAFAAGIATGVWKETMQFKIGGKFTPQLDENHKTQKLKEWKKAISKSLDWIDTKN</sequence>
<evidence type="ECO:0000250" key="1"/>
<evidence type="ECO:0000305" key="2"/>
<organism>
    <name type="scientific">Dictyostelium discoideum</name>
    <name type="common">Social amoeba</name>
    <dbReference type="NCBI Taxonomy" id="44689"/>
    <lineage>
        <taxon>Eukaryota</taxon>
        <taxon>Amoebozoa</taxon>
        <taxon>Evosea</taxon>
        <taxon>Eumycetozoa</taxon>
        <taxon>Dictyostelia</taxon>
        <taxon>Dictyosteliales</taxon>
        <taxon>Dictyosteliaceae</taxon>
        <taxon>Dictyostelium</taxon>
    </lineage>
</organism>
<comment type="catalytic activity">
    <reaction>
        <text>glycerol + ATP = sn-glycerol 3-phosphate + ADP + H(+)</text>
        <dbReference type="Rhea" id="RHEA:21644"/>
        <dbReference type="ChEBI" id="CHEBI:15378"/>
        <dbReference type="ChEBI" id="CHEBI:17754"/>
        <dbReference type="ChEBI" id="CHEBI:30616"/>
        <dbReference type="ChEBI" id="CHEBI:57597"/>
        <dbReference type="ChEBI" id="CHEBI:456216"/>
        <dbReference type="EC" id="2.7.1.30"/>
    </reaction>
</comment>
<comment type="pathway">
    <text>Polyol metabolism; glycerol degradation via glycerol kinase pathway; sn-glycerol 3-phosphate from glycerol: step 1/1.</text>
</comment>
<comment type="similarity">
    <text evidence="2">Belongs to the FGGY kinase family.</text>
</comment>
<name>GLPK_DICDI</name>
<accession>Q54VT8</accession>
<keyword id="KW-0067">ATP-binding</keyword>
<keyword id="KW-0319">Glycerol metabolism</keyword>
<keyword id="KW-0418">Kinase</keyword>
<keyword id="KW-0547">Nucleotide-binding</keyword>
<keyword id="KW-1185">Reference proteome</keyword>
<keyword id="KW-0808">Transferase</keyword>